<reference key="1">
    <citation type="journal article" date="2010" name="Genome Biol. Evol.">
        <title>Continuing evolution of Burkholderia mallei through genome reduction and large-scale rearrangements.</title>
        <authorList>
            <person name="Losada L."/>
            <person name="Ronning C.M."/>
            <person name="DeShazer D."/>
            <person name="Woods D."/>
            <person name="Fedorova N."/>
            <person name="Kim H.S."/>
            <person name="Shabalina S.A."/>
            <person name="Pearson T.R."/>
            <person name="Brinkac L."/>
            <person name="Tan P."/>
            <person name="Nandi T."/>
            <person name="Crabtree J."/>
            <person name="Badger J."/>
            <person name="Beckstrom-Sternberg S."/>
            <person name="Saqib M."/>
            <person name="Schutzer S.E."/>
            <person name="Keim P."/>
            <person name="Nierman W.C."/>
        </authorList>
    </citation>
    <scope>NUCLEOTIDE SEQUENCE [LARGE SCALE GENOMIC DNA]</scope>
    <source>
        <strain>SAVP1</strain>
    </source>
</reference>
<feature type="chain" id="PRO_1000052024" description="Large ribosomal subunit protein uL3">
    <location>
        <begin position="1"/>
        <end position="219"/>
    </location>
</feature>
<feature type="region of interest" description="Disordered" evidence="2">
    <location>
        <begin position="133"/>
        <end position="153"/>
    </location>
</feature>
<feature type="modified residue" description="N5-methylglutamine" evidence="1">
    <location>
        <position position="153"/>
    </location>
</feature>
<keyword id="KW-0488">Methylation</keyword>
<keyword id="KW-0687">Ribonucleoprotein</keyword>
<keyword id="KW-0689">Ribosomal protein</keyword>
<keyword id="KW-0694">RNA-binding</keyword>
<keyword id="KW-0699">rRNA-binding</keyword>
<name>RL3_BURMS</name>
<evidence type="ECO:0000255" key="1">
    <source>
        <dbReference type="HAMAP-Rule" id="MF_01325"/>
    </source>
</evidence>
<evidence type="ECO:0000256" key="2">
    <source>
        <dbReference type="SAM" id="MobiDB-lite"/>
    </source>
</evidence>
<evidence type="ECO:0000305" key="3"/>
<comment type="function">
    <text evidence="1">One of the primary rRNA binding proteins, it binds directly near the 3'-end of the 23S rRNA, where it nucleates assembly of the 50S subunit.</text>
</comment>
<comment type="subunit">
    <text evidence="1">Part of the 50S ribosomal subunit. Forms a cluster with proteins L14 and L19.</text>
</comment>
<comment type="PTM">
    <text evidence="1">Methylated by PrmB.</text>
</comment>
<comment type="similarity">
    <text evidence="1">Belongs to the universal ribosomal protein uL3 family.</text>
</comment>
<protein>
    <recommendedName>
        <fullName evidence="1">Large ribosomal subunit protein uL3</fullName>
    </recommendedName>
    <alternativeName>
        <fullName evidence="3">50S ribosomal protein L3</fullName>
    </alternativeName>
</protein>
<gene>
    <name evidence="1" type="primary">rplC</name>
    <name type="ordered locus">BMASAVP1_A3169</name>
</gene>
<sequence length="219" mass="22967">MSLGLVGRKVGMTRIFTAEGDSIPVTVLDVSDNRVTQIKTVETDGYTAVQVAFGSRRASRVTKPLAGHLAKAGVEAGEILKEFRIEADKAAELSNGAVIGPDLFEVGQKVDVQGVSIGKGYAGTIKRYNFGSGRASHGNSRSHNVPGSIGMAQDPGRVFPGKRMTGHMGDETVTVQNLEIARIDADRKLLLVKGAVPGAKGGKVFVTPAVKTRAVKGAK</sequence>
<proteinExistence type="inferred from homology"/>
<organism>
    <name type="scientific">Burkholderia mallei (strain SAVP1)</name>
    <dbReference type="NCBI Taxonomy" id="320388"/>
    <lineage>
        <taxon>Bacteria</taxon>
        <taxon>Pseudomonadati</taxon>
        <taxon>Pseudomonadota</taxon>
        <taxon>Betaproteobacteria</taxon>
        <taxon>Burkholderiales</taxon>
        <taxon>Burkholderiaceae</taxon>
        <taxon>Burkholderia</taxon>
        <taxon>pseudomallei group</taxon>
    </lineage>
</organism>
<accession>A1V8A3</accession>
<dbReference type="EMBL" id="CP000526">
    <property type="protein sequence ID" value="ABM51145.1"/>
    <property type="molecule type" value="Genomic_DNA"/>
</dbReference>
<dbReference type="RefSeq" id="WP_004521904.1">
    <property type="nucleotide sequence ID" value="NC_008785.1"/>
</dbReference>
<dbReference type="SMR" id="A1V8A3"/>
<dbReference type="GeneID" id="93061832"/>
<dbReference type="KEGG" id="bmv:BMASAVP1_A3169"/>
<dbReference type="HOGENOM" id="CLU_044142_4_1_4"/>
<dbReference type="GO" id="GO:0022625">
    <property type="term" value="C:cytosolic large ribosomal subunit"/>
    <property type="evidence" value="ECO:0007669"/>
    <property type="project" value="TreeGrafter"/>
</dbReference>
<dbReference type="GO" id="GO:0019843">
    <property type="term" value="F:rRNA binding"/>
    <property type="evidence" value="ECO:0007669"/>
    <property type="project" value="UniProtKB-UniRule"/>
</dbReference>
<dbReference type="GO" id="GO:0003735">
    <property type="term" value="F:structural constituent of ribosome"/>
    <property type="evidence" value="ECO:0007669"/>
    <property type="project" value="InterPro"/>
</dbReference>
<dbReference type="GO" id="GO:0006412">
    <property type="term" value="P:translation"/>
    <property type="evidence" value="ECO:0007669"/>
    <property type="project" value="UniProtKB-UniRule"/>
</dbReference>
<dbReference type="FunFam" id="2.40.30.10:FF:000004">
    <property type="entry name" value="50S ribosomal protein L3"/>
    <property type="match status" value="1"/>
</dbReference>
<dbReference type="FunFam" id="3.30.160.810:FF:000001">
    <property type="entry name" value="50S ribosomal protein L3"/>
    <property type="match status" value="1"/>
</dbReference>
<dbReference type="Gene3D" id="3.30.160.810">
    <property type="match status" value="1"/>
</dbReference>
<dbReference type="Gene3D" id="2.40.30.10">
    <property type="entry name" value="Translation factors"/>
    <property type="match status" value="1"/>
</dbReference>
<dbReference type="HAMAP" id="MF_01325_B">
    <property type="entry name" value="Ribosomal_uL3_B"/>
    <property type="match status" value="1"/>
</dbReference>
<dbReference type="InterPro" id="IPR000597">
    <property type="entry name" value="Ribosomal_uL3"/>
</dbReference>
<dbReference type="InterPro" id="IPR019927">
    <property type="entry name" value="Ribosomal_uL3_bac/org-type"/>
</dbReference>
<dbReference type="InterPro" id="IPR019926">
    <property type="entry name" value="Ribosomal_uL3_CS"/>
</dbReference>
<dbReference type="InterPro" id="IPR009000">
    <property type="entry name" value="Transl_B-barrel_sf"/>
</dbReference>
<dbReference type="NCBIfam" id="TIGR03625">
    <property type="entry name" value="L3_bact"/>
    <property type="match status" value="1"/>
</dbReference>
<dbReference type="PANTHER" id="PTHR11229">
    <property type="entry name" value="50S RIBOSOMAL PROTEIN L3"/>
    <property type="match status" value="1"/>
</dbReference>
<dbReference type="PANTHER" id="PTHR11229:SF16">
    <property type="entry name" value="LARGE RIBOSOMAL SUBUNIT PROTEIN UL3C"/>
    <property type="match status" value="1"/>
</dbReference>
<dbReference type="Pfam" id="PF00297">
    <property type="entry name" value="Ribosomal_L3"/>
    <property type="match status" value="1"/>
</dbReference>
<dbReference type="SUPFAM" id="SSF50447">
    <property type="entry name" value="Translation proteins"/>
    <property type="match status" value="1"/>
</dbReference>
<dbReference type="PROSITE" id="PS00474">
    <property type="entry name" value="RIBOSOMAL_L3"/>
    <property type="match status" value="1"/>
</dbReference>